<feature type="chain" id="PRO_0000302060" description="Protein terminal ear1 homolog">
    <location>
        <begin position="1"/>
        <end position="680"/>
    </location>
</feature>
<feature type="domain" description="RRM" evidence="1">
    <location>
        <begin position="223"/>
        <end position="295"/>
    </location>
</feature>
<feature type="region of interest" description="Disordered" evidence="2">
    <location>
        <begin position="294"/>
        <end position="415"/>
    </location>
</feature>
<feature type="region of interest" description="Disordered" evidence="2">
    <location>
        <begin position="593"/>
        <end position="680"/>
    </location>
</feature>
<feature type="compositionally biased region" description="Low complexity" evidence="2">
    <location>
        <begin position="328"/>
        <end position="340"/>
    </location>
</feature>
<feature type="compositionally biased region" description="Low complexity" evidence="2">
    <location>
        <begin position="379"/>
        <end position="403"/>
    </location>
</feature>
<feature type="compositionally biased region" description="Gly residues" evidence="2">
    <location>
        <begin position="404"/>
        <end position="413"/>
    </location>
</feature>
<feature type="compositionally biased region" description="Low complexity" evidence="2">
    <location>
        <begin position="602"/>
        <end position="621"/>
    </location>
</feature>
<feature type="compositionally biased region" description="Low complexity" evidence="2">
    <location>
        <begin position="634"/>
        <end position="648"/>
    </location>
</feature>
<feature type="compositionally biased region" description="Basic and acidic residues" evidence="2">
    <location>
        <begin position="656"/>
        <end position="666"/>
    </location>
</feature>
<name>EAR1_ORYSI</name>
<reference key="1">
    <citation type="journal article" date="2006" name="Cell Res.">
        <title>LEAFY HEAD2, which encodes a putative RNA-binding protein, regulates shoot development of rice.</title>
        <authorList>
            <person name="Xiong G.S."/>
            <person name="Hu X.M."/>
            <person name="Jiao Y.Q."/>
            <person name="Yu Y.C."/>
            <person name="Chu C.C."/>
            <person name="Li J.Y."/>
            <person name="Qian Q."/>
            <person name="Wang Y.H."/>
        </authorList>
    </citation>
    <scope>NUCLEOTIDE SEQUENCE [GENOMIC DNA]</scope>
    <scope>FUNCTION</scope>
    <scope>TISSUE SPECIFICITY</scope>
    <scope>DISRUPTION PHENOTYPE</scope>
    <source>
        <strain>cv. TN1</strain>
    </source>
</reference>
<reference key="2">
    <citation type="journal article" date="2005" name="PLoS Biol.">
        <title>The genomes of Oryza sativa: a history of duplications.</title>
        <authorList>
            <person name="Yu J."/>
            <person name="Wang J."/>
            <person name="Lin W."/>
            <person name="Li S."/>
            <person name="Li H."/>
            <person name="Zhou J."/>
            <person name="Ni P."/>
            <person name="Dong W."/>
            <person name="Hu S."/>
            <person name="Zeng C."/>
            <person name="Zhang J."/>
            <person name="Zhang Y."/>
            <person name="Li R."/>
            <person name="Xu Z."/>
            <person name="Li S."/>
            <person name="Li X."/>
            <person name="Zheng H."/>
            <person name="Cong L."/>
            <person name="Lin L."/>
            <person name="Yin J."/>
            <person name="Geng J."/>
            <person name="Li G."/>
            <person name="Shi J."/>
            <person name="Liu J."/>
            <person name="Lv H."/>
            <person name="Li J."/>
            <person name="Wang J."/>
            <person name="Deng Y."/>
            <person name="Ran L."/>
            <person name="Shi X."/>
            <person name="Wang X."/>
            <person name="Wu Q."/>
            <person name="Li C."/>
            <person name="Ren X."/>
            <person name="Wang J."/>
            <person name="Wang X."/>
            <person name="Li D."/>
            <person name="Liu D."/>
            <person name="Zhang X."/>
            <person name="Ji Z."/>
            <person name="Zhao W."/>
            <person name="Sun Y."/>
            <person name="Zhang Z."/>
            <person name="Bao J."/>
            <person name="Han Y."/>
            <person name="Dong L."/>
            <person name="Ji J."/>
            <person name="Chen P."/>
            <person name="Wu S."/>
            <person name="Liu J."/>
            <person name="Xiao Y."/>
            <person name="Bu D."/>
            <person name="Tan J."/>
            <person name="Yang L."/>
            <person name="Ye C."/>
            <person name="Zhang J."/>
            <person name="Xu J."/>
            <person name="Zhou Y."/>
            <person name="Yu Y."/>
            <person name="Zhang B."/>
            <person name="Zhuang S."/>
            <person name="Wei H."/>
            <person name="Liu B."/>
            <person name="Lei M."/>
            <person name="Yu H."/>
            <person name="Li Y."/>
            <person name="Xu H."/>
            <person name="Wei S."/>
            <person name="He X."/>
            <person name="Fang L."/>
            <person name="Zhang Z."/>
            <person name="Zhang Y."/>
            <person name="Huang X."/>
            <person name="Su Z."/>
            <person name="Tong W."/>
            <person name="Li J."/>
            <person name="Tong Z."/>
            <person name="Li S."/>
            <person name="Ye J."/>
            <person name="Wang L."/>
            <person name="Fang L."/>
            <person name="Lei T."/>
            <person name="Chen C.-S."/>
            <person name="Chen H.-C."/>
            <person name="Xu Z."/>
            <person name="Li H."/>
            <person name="Huang H."/>
            <person name="Zhang F."/>
            <person name="Xu H."/>
            <person name="Li N."/>
            <person name="Zhao C."/>
            <person name="Li S."/>
            <person name="Dong L."/>
            <person name="Huang Y."/>
            <person name="Li L."/>
            <person name="Xi Y."/>
            <person name="Qi Q."/>
            <person name="Li W."/>
            <person name="Zhang B."/>
            <person name="Hu W."/>
            <person name="Zhang Y."/>
            <person name="Tian X."/>
            <person name="Jiao Y."/>
            <person name="Liang X."/>
            <person name="Jin J."/>
            <person name="Gao L."/>
            <person name="Zheng W."/>
            <person name="Hao B."/>
            <person name="Liu S.-M."/>
            <person name="Wang W."/>
            <person name="Yuan L."/>
            <person name="Cao M."/>
            <person name="McDermott J."/>
            <person name="Samudrala R."/>
            <person name="Wang J."/>
            <person name="Wong G.K.-S."/>
            <person name="Yang H."/>
        </authorList>
    </citation>
    <scope>NUCLEOTIDE SEQUENCE [LARGE SCALE GENOMIC DNA]</scope>
    <source>
        <strain>cv. 93-11</strain>
    </source>
</reference>
<keyword id="KW-0217">Developmental protein</keyword>
<keyword id="KW-1185">Reference proteome</keyword>
<keyword id="KW-0677">Repeat</keyword>
<keyword id="KW-0694">RNA-binding</keyword>
<sequence length="680" mass="71597">MEEGGGSGVGGMQGAASNLLDAGAQAFYPAVGAPFPFQQLPHQLYCPQPPPPPYQVMPVSPPPPPVGLPVPPLPATMAPQPGYCVPAAATVVDGPASRAVVLSLVPPHAPEDEIARAMAPFGAVRAVDASAVASEGVATVYFFDLRSAEHAVTGVREQHIRQQCRLGQLYAAAAAAAASSPTWPPPAWDWPHDDNRGLVLGQAVWAHFAAASTVPDDGASRGSLVVLNSLPAMSVFELREIFQAYGDVKDVRESALRPSNKFVEFFDTRDADRALHELNGKELFGRRLVVEYTRPSLPGPRRRGHVSHQPLAPTPPRLQAAWRPAPAPSQSAQPSSSGSGKAREGVVLLRRSSGKGSSGSQSKGGGNAGHERKSKGGKSAAAACSTAASASSSTATAPSKQSQKGGGGRGGSWRGQKSGWEARFLFKEPEAAAAAAGDAAASETHEPASCKDTRTTVMIRNIPNKYSQKLLLNMLDNHCILSNQQIEASCEDEAQPFSSYDFLYLPIDFNNKCNVGYGFVNLTSPEAAVRLYKAFHKQPWEVFNSRKICQVTYARVQGLDALKEHFKNSKFPCDSDEYLPVVFSPPRDGKLLTEPVPLVGRSPAPSSASGASSPPKSCAASVDPLAQQLMTAPSSSGDGASSASSSNAHADEDDVHGETGGDRGDDAGLDLELQRLGYTD</sequence>
<accession>A2WY46</accession>
<accession>Q27K34</accession>
<accession>Q8LIW1</accession>
<comment type="function">
    <text evidence="3">Probable RNA-binding protein. Involved in the regular timing (plastochron) of lateral organs formation. May regulate the rate of leaf initiation and the duration of vegetative phase. Seems to be redundant to the function of PLASTOCHRON1, but to act in an independent pathway.</text>
</comment>
<comment type="tissue specificity">
    <text evidence="3">Highly expressed in shoot apex and inflorescence apex, at intermediate levels in roots and at low levels in leaf blade and leaf sheath.</text>
</comment>
<comment type="disruption phenotype">
    <text evidence="3">Plants produce threefold the number of leaves, and leaf size and plant height are strongly reduced compared to wild-type. Shoot apical meristem (SAM) shows a higher rate of cell division and internode elongation is significantly reduced. Some inflorescence branches are converted into vegetative shoots.</text>
</comment>
<comment type="miscellaneous">
    <text>Plastochron is defined as the time interval between leaf initiation events.</text>
</comment>
<dbReference type="EMBL" id="DQ393277">
    <property type="protein sequence ID" value="ABD49441.1"/>
    <property type="molecule type" value="Genomic_DNA"/>
</dbReference>
<dbReference type="EMBL" id="CM000126">
    <property type="protein sequence ID" value="EAY76892.1"/>
    <property type="molecule type" value="Genomic_DNA"/>
</dbReference>
<dbReference type="STRING" id="39946.A2WY46"/>
<dbReference type="EnsemblPlants" id="BGIOSGA005013-TA">
    <property type="protein sequence ID" value="BGIOSGA005013-PA"/>
    <property type="gene ID" value="BGIOSGA005013"/>
</dbReference>
<dbReference type="EnsemblPlants" id="OsGoSa_01g0043330.01">
    <property type="protein sequence ID" value="OsGoSa_01g0043330.01"/>
    <property type="gene ID" value="OsGoSa_01g0043330"/>
</dbReference>
<dbReference type="EnsemblPlants" id="OsIR64_01g0042760.01">
    <property type="protein sequence ID" value="OsIR64_01g0042760.01"/>
    <property type="gene ID" value="OsIR64_01g0042760"/>
</dbReference>
<dbReference type="EnsemblPlants" id="OsKYG_01g0043050.01">
    <property type="protein sequence ID" value="OsKYG_01g0043050.01"/>
    <property type="gene ID" value="OsKYG_01g0043050"/>
</dbReference>
<dbReference type="EnsemblPlants" id="OsLaMu_01g0043100.01">
    <property type="protein sequence ID" value="OsLaMu_01g0043100.01"/>
    <property type="gene ID" value="OsLaMu_01g0043100"/>
</dbReference>
<dbReference type="EnsemblPlants" id="OsLima_01g0043090.01">
    <property type="protein sequence ID" value="OsLima_01g0043090.01"/>
    <property type="gene ID" value="OsLima_01g0043090"/>
</dbReference>
<dbReference type="EnsemblPlants" id="OsMH63_01G044050_01">
    <property type="protein sequence ID" value="OsMH63_01G044050_01"/>
    <property type="gene ID" value="OsMH63_01G044050"/>
</dbReference>
<dbReference type="EnsemblPlants" id="OsPr106_01g0043120.01">
    <property type="protein sequence ID" value="OsPr106_01g0043120.01"/>
    <property type="gene ID" value="OsPr106_01g0043120"/>
</dbReference>
<dbReference type="EnsemblPlants" id="OsZS97_01G043340_01">
    <property type="protein sequence ID" value="OsZS97_01G043340_01"/>
    <property type="gene ID" value="OsZS97_01G043340"/>
</dbReference>
<dbReference type="Gramene" id="BGIOSGA005013-TA">
    <property type="protein sequence ID" value="BGIOSGA005013-PA"/>
    <property type="gene ID" value="BGIOSGA005013"/>
</dbReference>
<dbReference type="Gramene" id="OsGoSa_01g0043330.01">
    <property type="protein sequence ID" value="OsGoSa_01g0043330.01"/>
    <property type="gene ID" value="OsGoSa_01g0043330"/>
</dbReference>
<dbReference type="Gramene" id="OsIR64_01g0042760.01">
    <property type="protein sequence ID" value="OsIR64_01g0042760.01"/>
    <property type="gene ID" value="OsIR64_01g0042760"/>
</dbReference>
<dbReference type="Gramene" id="OsKYG_01g0043050.01">
    <property type="protein sequence ID" value="OsKYG_01g0043050.01"/>
    <property type="gene ID" value="OsKYG_01g0043050"/>
</dbReference>
<dbReference type="Gramene" id="OsLaMu_01g0043100.01">
    <property type="protein sequence ID" value="OsLaMu_01g0043100.01"/>
    <property type="gene ID" value="OsLaMu_01g0043100"/>
</dbReference>
<dbReference type="Gramene" id="OsLima_01g0043090.01">
    <property type="protein sequence ID" value="OsLima_01g0043090.01"/>
    <property type="gene ID" value="OsLima_01g0043090"/>
</dbReference>
<dbReference type="Gramene" id="OsMH63_01G044050_01">
    <property type="protein sequence ID" value="OsMH63_01G044050_01"/>
    <property type="gene ID" value="OsMH63_01G044050"/>
</dbReference>
<dbReference type="Gramene" id="OsPr106_01g0043120.01">
    <property type="protein sequence ID" value="OsPr106_01g0043120.01"/>
    <property type="gene ID" value="OsPr106_01g0043120"/>
</dbReference>
<dbReference type="Gramene" id="OsZS97_01G043340_01">
    <property type="protein sequence ID" value="OsZS97_01G043340_01"/>
    <property type="gene ID" value="OsZS97_01G043340"/>
</dbReference>
<dbReference type="HOGENOM" id="CLU_023146_1_0_1"/>
<dbReference type="OMA" id="MLDQHCI"/>
<dbReference type="OrthoDB" id="417481at2759"/>
<dbReference type="Proteomes" id="UP000007015">
    <property type="component" value="Chromosome 1"/>
</dbReference>
<dbReference type="GO" id="GO:0003723">
    <property type="term" value="F:RNA binding"/>
    <property type="evidence" value="ECO:0007669"/>
    <property type="project" value="UniProtKB-KW"/>
</dbReference>
<dbReference type="CDD" id="cd12526">
    <property type="entry name" value="RRM1_EAR1_like"/>
    <property type="match status" value="1"/>
</dbReference>
<dbReference type="CDD" id="cd12527">
    <property type="entry name" value="RRM2_EAR1_like"/>
    <property type="match status" value="1"/>
</dbReference>
<dbReference type="CDD" id="cd12530">
    <property type="entry name" value="RRM3_EAR1_like"/>
    <property type="match status" value="1"/>
</dbReference>
<dbReference type="FunFam" id="3.30.70.330:FF:000750">
    <property type="entry name" value="Protein terminal ear1 homolog"/>
    <property type="match status" value="1"/>
</dbReference>
<dbReference type="FunFam" id="3.30.70.330:FF:001402">
    <property type="entry name" value="Terminal EAR1-like 1"/>
    <property type="match status" value="1"/>
</dbReference>
<dbReference type="Gene3D" id="3.30.70.330">
    <property type="match status" value="2"/>
</dbReference>
<dbReference type="InterPro" id="IPR034458">
    <property type="entry name" value="EAR1-like_RRM3"/>
</dbReference>
<dbReference type="InterPro" id="IPR007201">
    <property type="entry name" value="Mei2-like_Rrm_C"/>
</dbReference>
<dbReference type="InterPro" id="IPR012677">
    <property type="entry name" value="Nucleotide-bd_a/b_plait_sf"/>
</dbReference>
<dbReference type="InterPro" id="IPR035979">
    <property type="entry name" value="RBD_domain_sf"/>
</dbReference>
<dbReference type="InterPro" id="IPR000504">
    <property type="entry name" value="RRM_dom"/>
</dbReference>
<dbReference type="PANTHER" id="PTHR23189">
    <property type="entry name" value="RNA RECOGNITION MOTIF-CONTAINING"/>
    <property type="match status" value="1"/>
</dbReference>
<dbReference type="Pfam" id="PF00076">
    <property type="entry name" value="RRM_1"/>
    <property type="match status" value="2"/>
</dbReference>
<dbReference type="Pfam" id="PF04059">
    <property type="entry name" value="RRM_2"/>
    <property type="match status" value="1"/>
</dbReference>
<dbReference type="SMART" id="SM00360">
    <property type="entry name" value="RRM"/>
    <property type="match status" value="2"/>
</dbReference>
<dbReference type="SUPFAM" id="SSF54928">
    <property type="entry name" value="RNA-binding domain, RBD"/>
    <property type="match status" value="2"/>
</dbReference>
<dbReference type="PROSITE" id="PS50102">
    <property type="entry name" value="RRM"/>
    <property type="match status" value="1"/>
</dbReference>
<proteinExistence type="evidence at transcript level"/>
<evidence type="ECO:0000255" key="1">
    <source>
        <dbReference type="PROSITE-ProRule" id="PRU00176"/>
    </source>
</evidence>
<evidence type="ECO:0000256" key="2">
    <source>
        <dbReference type="SAM" id="MobiDB-lite"/>
    </source>
</evidence>
<evidence type="ECO:0000269" key="3">
    <source>
    </source>
</evidence>
<organism>
    <name type="scientific">Oryza sativa subsp. indica</name>
    <name type="common">Rice</name>
    <dbReference type="NCBI Taxonomy" id="39946"/>
    <lineage>
        <taxon>Eukaryota</taxon>
        <taxon>Viridiplantae</taxon>
        <taxon>Streptophyta</taxon>
        <taxon>Embryophyta</taxon>
        <taxon>Tracheophyta</taxon>
        <taxon>Spermatophyta</taxon>
        <taxon>Magnoliopsida</taxon>
        <taxon>Liliopsida</taxon>
        <taxon>Poales</taxon>
        <taxon>Poaceae</taxon>
        <taxon>BOP clade</taxon>
        <taxon>Oryzoideae</taxon>
        <taxon>Oryzeae</taxon>
        <taxon>Oryzinae</taxon>
        <taxon>Oryza</taxon>
        <taxon>Oryza sativa</taxon>
    </lineage>
</organism>
<protein>
    <recommendedName>
        <fullName>Protein terminal ear1 homolog</fullName>
    </recommendedName>
    <alternativeName>
        <fullName>Protein LEAFY HEAD2</fullName>
    </alternativeName>
    <alternativeName>
        <fullName>Protein PLASTOCHRON2</fullName>
    </alternativeName>
</protein>
<gene>
    <name type="primary">PLA2</name>
    <name type="synonym">LHD2</name>
    <name type="ORF">OsI_004739</name>
</gene>